<reference key="1">
    <citation type="submission" date="2005-11" db="EMBL/GenBank/DDBJ databases">
        <authorList>
            <consortium name="NIH - Mammalian Gene Collection (MGC) project"/>
        </authorList>
    </citation>
    <scope>NUCLEOTIDE SEQUENCE [LARGE SCALE MRNA]</scope>
    <source>
        <strain>Crossbred X Angus</strain>
        <tissue>Liver</tissue>
    </source>
</reference>
<gene>
    <name type="primary">BTBD16</name>
</gene>
<sequence length="499" mass="57560">MKMLNPQKPRLERRIAGSTNRWRFPRQPFSGDLLGLSQMCKAANIDFDEVLKNPDRLCISQIQKIFPENLKNKTIQSREADVILECLGFKWELHQPQLFQSETLAKLYLMGLARGNANPEKESVKILQAQQPGRSREQRPVKINDPLVTREAFATALKNLYMQEVKICLDDVLGVLAAAHILQFGSLFQRCVTVMMSGLTPSTIKNFYLAGCKYKEEPLTTACEKWMEMNLVPLVGTQIHLRKIPKELLHKVLKSPRLFTFSEFDLLKTLLLWVYLQLNNKTQTFPMYQTVLMFFSSFPKNCAFLDRDVGQNLIPLFLCLRLHSITKGKDLEELRHINFFPESWLVRVTANHYHALENGGDMAHVKDLSTQAVRFGRLFNQEYTTHSKVITLYGFFFEIKGIKHDTTSYSFHMQRIRHTDLECASTVYENTPISLRAERLVTYEIRAQTTVDGKWQEFRTNQITQKFGLAEPSCKSHALKIQTVGIPIYASFSFVFSLS</sequence>
<feature type="chain" id="PRO_0000247120" description="BTB/POZ domain-containing protein 16">
    <location>
        <begin position="1"/>
        <end position="499"/>
    </location>
</feature>
<feature type="domain" description="BTB">
    <location>
        <begin position="143"/>
        <end position="199"/>
    </location>
</feature>
<dbReference type="EMBL" id="BC109807">
    <property type="protein sequence ID" value="AAI09808.1"/>
    <property type="molecule type" value="mRNA"/>
</dbReference>
<dbReference type="RefSeq" id="NP_001033220.1">
    <property type="nucleotide sequence ID" value="NM_001038131.1"/>
</dbReference>
<dbReference type="SMR" id="Q32L18"/>
<dbReference type="FunCoup" id="Q32L18">
    <property type="interactions" value="27"/>
</dbReference>
<dbReference type="STRING" id="9913.ENSBTAP00000011611"/>
<dbReference type="PaxDb" id="9913-ENSBTAP00000011611"/>
<dbReference type="GeneID" id="518515"/>
<dbReference type="KEGG" id="bta:518515"/>
<dbReference type="CTD" id="118663"/>
<dbReference type="eggNOG" id="KOG4682">
    <property type="taxonomic scope" value="Eukaryota"/>
</dbReference>
<dbReference type="InParanoid" id="Q32L18"/>
<dbReference type="OrthoDB" id="6359943at2759"/>
<dbReference type="Proteomes" id="UP000009136">
    <property type="component" value="Unplaced"/>
</dbReference>
<dbReference type="CDD" id="cd18492">
    <property type="entry name" value="BACK_BTBD16"/>
    <property type="match status" value="1"/>
</dbReference>
<dbReference type="CDD" id="cd18291">
    <property type="entry name" value="BTB_POZ_BTBD16"/>
    <property type="match status" value="1"/>
</dbReference>
<dbReference type="Gene3D" id="3.30.710.10">
    <property type="entry name" value="Potassium Channel Kv1.1, Chain A"/>
    <property type="match status" value="1"/>
</dbReference>
<dbReference type="InterPro" id="IPR056426">
    <property type="entry name" value="BTB_BTBDG"/>
</dbReference>
<dbReference type="InterPro" id="IPR042833">
    <property type="entry name" value="BTBD16"/>
</dbReference>
<dbReference type="InterPro" id="IPR048859">
    <property type="entry name" value="BTBD16_C"/>
</dbReference>
<dbReference type="InterPro" id="IPR011333">
    <property type="entry name" value="SKP1/BTB/POZ_sf"/>
</dbReference>
<dbReference type="PANTHER" id="PTHR46843">
    <property type="entry name" value="BTB/POZ DOMAIN-CONTAINING PROTEIN 16"/>
    <property type="match status" value="1"/>
</dbReference>
<dbReference type="PANTHER" id="PTHR46843:SF1">
    <property type="entry name" value="BTB_POZ DOMAIN-CONTAINING PROTEIN 16"/>
    <property type="match status" value="1"/>
</dbReference>
<dbReference type="Pfam" id="PF23998">
    <property type="entry name" value="BTB_BTBDG"/>
    <property type="match status" value="1"/>
</dbReference>
<dbReference type="Pfam" id="PF21059">
    <property type="entry name" value="BTBD16_C"/>
    <property type="match status" value="1"/>
</dbReference>
<dbReference type="SUPFAM" id="SSF54695">
    <property type="entry name" value="POZ domain"/>
    <property type="match status" value="1"/>
</dbReference>
<protein>
    <recommendedName>
        <fullName>BTB/POZ domain-containing protein 16</fullName>
    </recommendedName>
</protein>
<proteinExistence type="evidence at transcript level"/>
<accession>Q32L18</accession>
<keyword id="KW-1185">Reference proteome</keyword>
<organism>
    <name type="scientific">Bos taurus</name>
    <name type="common">Bovine</name>
    <dbReference type="NCBI Taxonomy" id="9913"/>
    <lineage>
        <taxon>Eukaryota</taxon>
        <taxon>Metazoa</taxon>
        <taxon>Chordata</taxon>
        <taxon>Craniata</taxon>
        <taxon>Vertebrata</taxon>
        <taxon>Euteleostomi</taxon>
        <taxon>Mammalia</taxon>
        <taxon>Eutheria</taxon>
        <taxon>Laurasiatheria</taxon>
        <taxon>Artiodactyla</taxon>
        <taxon>Ruminantia</taxon>
        <taxon>Pecora</taxon>
        <taxon>Bovidae</taxon>
        <taxon>Bovinae</taxon>
        <taxon>Bos</taxon>
    </lineage>
</organism>
<name>BTBDG_BOVIN</name>